<feature type="chain" id="PRO_0000136343" description="Phosphoribosyl-ATP pyrophosphatase">
    <location>
        <begin position="1"/>
        <end position="107"/>
    </location>
</feature>
<keyword id="KW-0028">Amino-acid biosynthesis</keyword>
<keyword id="KW-0067">ATP-binding</keyword>
<keyword id="KW-0963">Cytoplasm</keyword>
<keyword id="KW-0368">Histidine biosynthesis</keyword>
<keyword id="KW-0378">Hydrolase</keyword>
<keyword id="KW-0547">Nucleotide-binding</keyword>
<keyword id="KW-1185">Reference proteome</keyword>
<name>HIS2_BACAN</name>
<gene>
    <name evidence="1" type="primary">hisE</name>
    <name type="ordered locus">BA_1431.2</name>
    <name type="ordered locus">GBAA_1431.2</name>
    <name type="ordered locus">BAS1323</name>
</gene>
<dbReference type="EC" id="3.6.1.31" evidence="1"/>
<dbReference type="EMBL" id="AE016879">
    <property type="status" value="NOT_ANNOTATED_CDS"/>
    <property type="molecule type" value="Genomic_DNA"/>
</dbReference>
<dbReference type="EMBL" id="AE017334">
    <property type="status" value="NOT_ANNOTATED_CDS"/>
    <property type="molecule type" value="Genomic_DNA"/>
</dbReference>
<dbReference type="EMBL" id="AE017225">
    <property type="protein sequence ID" value="AAT53643.1"/>
    <property type="molecule type" value="Genomic_DNA"/>
</dbReference>
<dbReference type="RefSeq" id="YP_027592.1">
    <property type="nucleotide sequence ID" value="NC_005945.1"/>
</dbReference>
<dbReference type="SMR" id="P60534"/>
<dbReference type="STRING" id="261594.GBAA_5744"/>
<dbReference type="KEGG" id="bat:BAS1323"/>
<dbReference type="PATRIC" id="fig|260799.14.peg.1406"/>
<dbReference type="eggNOG" id="COG0140">
    <property type="taxonomic scope" value="Bacteria"/>
</dbReference>
<dbReference type="OMA" id="DLWFHCM"/>
<dbReference type="OrthoDB" id="9795769at2"/>
<dbReference type="UniPathway" id="UPA00031">
    <property type="reaction ID" value="UER00007"/>
</dbReference>
<dbReference type="Proteomes" id="UP000000427">
    <property type="component" value="Chromosome"/>
</dbReference>
<dbReference type="Proteomes" id="UP000000594">
    <property type="component" value="Chromosome"/>
</dbReference>
<dbReference type="GO" id="GO:0005737">
    <property type="term" value="C:cytoplasm"/>
    <property type="evidence" value="ECO:0007669"/>
    <property type="project" value="UniProtKB-SubCell"/>
</dbReference>
<dbReference type="GO" id="GO:0005524">
    <property type="term" value="F:ATP binding"/>
    <property type="evidence" value="ECO:0007669"/>
    <property type="project" value="UniProtKB-KW"/>
</dbReference>
<dbReference type="GO" id="GO:0004636">
    <property type="term" value="F:phosphoribosyl-ATP diphosphatase activity"/>
    <property type="evidence" value="ECO:0007669"/>
    <property type="project" value="UniProtKB-UniRule"/>
</dbReference>
<dbReference type="GO" id="GO:0000105">
    <property type="term" value="P:L-histidine biosynthetic process"/>
    <property type="evidence" value="ECO:0007669"/>
    <property type="project" value="UniProtKB-UniRule"/>
</dbReference>
<dbReference type="CDD" id="cd11534">
    <property type="entry name" value="NTP-PPase_HisIE_like"/>
    <property type="match status" value="1"/>
</dbReference>
<dbReference type="Gene3D" id="1.10.287.1080">
    <property type="entry name" value="MazG-like"/>
    <property type="match status" value="1"/>
</dbReference>
<dbReference type="HAMAP" id="MF_01020">
    <property type="entry name" value="HisE"/>
    <property type="match status" value="1"/>
</dbReference>
<dbReference type="InterPro" id="IPR008179">
    <property type="entry name" value="HisE"/>
</dbReference>
<dbReference type="InterPro" id="IPR021130">
    <property type="entry name" value="PRib-ATP_PPHydrolase-like"/>
</dbReference>
<dbReference type="NCBIfam" id="TIGR03188">
    <property type="entry name" value="histidine_hisI"/>
    <property type="match status" value="1"/>
</dbReference>
<dbReference type="NCBIfam" id="NF001611">
    <property type="entry name" value="PRK00400.1-3"/>
    <property type="match status" value="1"/>
</dbReference>
<dbReference type="PANTHER" id="PTHR42945">
    <property type="entry name" value="HISTIDINE BIOSYNTHESIS BIFUNCTIONAL PROTEIN"/>
    <property type="match status" value="1"/>
</dbReference>
<dbReference type="PANTHER" id="PTHR42945:SF9">
    <property type="entry name" value="HISTIDINE BIOSYNTHESIS BIFUNCTIONAL PROTEIN HISIE"/>
    <property type="match status" value="1"/>
</dbReference>
<dbReference type="Pfam" id="PF01503">
    <property type="entry name" value="PRA-PH"/>
    <property type="match status" value="1"/>
</dbReference>
<dbReference type="SUPFAM" id="SSF101386">
    <property type="entry name" value="all-alpha NTP pyrophosphatases"/>
    <property type="match status" value="1"/>
</dbReference>
<organism>
    <name type="scientific">Bacillus anthracis</name>
    <dbReference type="NCBI Taxonomy" id="1392"/>
    <lineage>
        <taxon>Bacteria</taxon>
        <taxon>Bacillati</taxon>
        <taxon>Bacillota</taxon>
        <taxon>Bacilli</taxon>
        <taxon>Bacillales</taxon>
        <taxon>Bacillaceae</taxon>
        <taxon>Bacillus</taxon>
        <taxon>Bacillus cereus group</taxon>
    </lineage>
</organism>
<comment type="catalytic activity">
    <reaction evidence="1">
        <text>1-(5-phospho-beta-D-ribosyl)-ATP + H2O = 1-(5-phospho-beta-D-ribosyl)-5'-AMP + diphosphate + H(+)</text>
        <dbReference type="Rhea" id="RHEA:22828"/>
        <dbReference type="ChEBI" id="CHEBI:15377"/>
        <dbReference type="ChEBI" id="CHEBI:15378"/>
        <dbReference type="ChEBI" id="CHEBI:33019"/>
        <dbReference type="ChEBI" id="CHEBI:59457"/>
        <dbReference type="ChEBI" id="CHEBI:73183"/>
        <dbReference type="EC" id="3.6.1.31"/>
    </reaction>
</comment>
<comment type="pathway">
    <text evidence="1">Amino-acid biosynthesis; L-histidine biosynthesis; L-histidine from 5-phospho-alpha-D-ribose 1-diphosphate: step 2/9.</text>
</comment>
<comment type="subcellular location">
    <subcellularLocation>
        <location evidence="1">Cytoplasm</location>
    </subcellularLocation>
</comment>
<comment type="similarity">
    <text evidence="1">Belongs to the PRA-PH family.</text>
</comment>
<accession>P60534</accession>
<accession>Q6I1D9</accession>
<evidence type="ECO:0000255" key="1">
    <source>
        <dbReference type="HAMAP-Rule" id="MF_01020"/>
    </source>
</evidence>
<sequence length="107" mass="12567">MENTFKLLFETIEERKRNPLPESYTNYLFSKGEDKILKKIGEECTEVIIASKNNDKEELVKEMVDVLYHCFVLLAEKNIPLEDIMEEVTERNGKLSRVGDRREIDTL</sequence>
<proteinExistence type="inferred from homology"/>
<protein>
    <recommendedName>
        <fullName evidence="1">Phosphoribosyl-ATP pyrophosphatase</fullName>
        <shortName evidence="1">PRA-PH</shortName>
        <ecNumber evidence="1">3.6.1.31</ecNumber>
    </recommendedName>
</protein>
<reference key="1">
    <citation type="journal article" date="2003" name="Nature">
        <title>The genome sequence of Bacillus anthracis Ames and comparison to closely related bacteria.</title>
        <authorList>
            <person name="Read T.D."/>
            <person name="Peterson S.N."/>
            <person name="Tourasse N.J."/>
            <person name="Baillie L.W."/>
            <person name="Paulsen I.T."/>
            <person name="Nelson K.E."/>
            <person name="Tettelin H."/>
            <person name="Fouts D.E."/>
            <person name="Eisen J.A."/>
            <person name="Gill S.R."/>
            <person name="Holtzapple E.K."/>
            <person name="Okstad O.A."/>
            <person name="Helgason E."/>
            <person name="Rilstone J."/>
            <person name="Wu M."/>
            <person name="Kolonay J.F."/>
            <person name="Beanan M.J."/>
            <person name="Dodson R.J."/>
            <person name="Brinkac L.M."/>
            <person name="Gwinn M.L."/>
            <person name="DeBoy R.T."/>
            <person name="Madpu R."/>
            <person name="Daugherty S.C."/>
            <person name="Durkin A.S."/>
            <person name="Haft D.H."/>
            <person name="Nelson W.C."/>
            <person name="Peterson J.D."/>
            <person name="Pop M."/>
            <person name="Khouri H.M."/>
            <person name="Radune D."/>
            <person name="Benton J.L."/>
            <person name="Mahamoud Y."/>
            <person name="Jiang L."/>
            <person name="Hance I.R."/>
            <person name="Weidman J.F."/>
            <person name="Berry K.J."/>
            <person name="Plaut R.D."/>
            <person name="Wolf A.M."/>
            <person name="Watkins K.L."/>
            <person name="Nierman W.C."/>
            <person name="Hazen A."/>
            <person name="Cline R.T."/>
            <person name="Redmond C."/>
            <person name="Thwaite J.E."/>
            <person name="White O."/>
            <person name="Salzberg S.L."/>
            <person name="Thomason B."/>
            <person name="Friedlander A.M."/>
            <person name="Koehler T.M."/>
            <person name="Hanna P.C."/>
            <person name="Kolstoe A.-B."/>
            <person name="Fraser C.M."/>
        </authorList>
    </citation>
    <scope>NUCLEOTIDE SEQUENCE [LARGE SCALE GENOMIC DNA]</scope>
    <source>
        <strain>Ames / isolate Porton</strain>
    </source>
</reference>
<reference key="2">
    <citation type="journal article" date="2009" name="J. Bacteriol.">
        <title>The complete genome sequence of Bacillus anthracis Ames 'Ancestor'.</title>
        <authorList>
            <person name="Ravel J."/>
            <person name="Jiang L."/>
            <person name="Stanley S.T."/>
            <person name="Wilson M.R."/>
            <person name="Decker R.S."/>
            <person name="Read T.D."/>
            <person name="Worsham P."/>
            <person name="Keim P.S."/>
            <person name="Salzberg S.L."/>
            <person name="Fraser-Liggett C.M."/>
            <person name="Rasko D.A."/>
        </authorList>
    </citation>
    <scope>NUCLEOTIDE SEQUENCE [LARGE SCALE GENOMIC DNA]</scope>
    <source>
        <strain>Ames ancestor</strain>
    </source>
</reference>
<reference key="3">
    <citation type="submission" date="2004-01" db="EMBL/GenBank/DDBJ databases">
        <title>Complete genome sequence of Bacillus anthracis Sterne.</title>
        <authorList>
            <person name="Brettin T.S."/>
            <person name="Bruce D."/>
            <person name="Challacombe J.F."/>
            <person name="Gilna P."/>
            <person name="Han C."/>
            <person name="Hill K."/>
            <person name="Hitchcock P."/>
            <person name="Jackson P."/>
            <person name="Keim P."/>
            <person name="Longmire J."/>
            <person name="Lucas S."/>
            <person name="Okinaka R."/>
            <person name="Richardson P."/>
            <person name="Rubin E."/>
            <person name="Tice H."/>
        </authorList>
    </citation>
    <scope>NUCLEOTIDE SEQUENCE [LARGE SCALE GENOMIC DNA]</scope>
    <source>
        <strain>Sterne</strain>
    </source>
</reference>